<proteinExistence type="inferred from homology"/>
<gene>
    <name evidence="1" type="primary">psaI</name>
</gene>
<feature type="chain" id="PRO_0000276042" description="Photosystem I reaction center subunit VIII">
    <location>
        <begin position="1"/>
        <end position="36"/>
    </location>
</feature>
<feature type="transmembrane region" description="Helical" evidence="1">
    <location>
        <begin position="8"/>
        <end position="28"/>
    </location>
</feature>
<dbReference type="EMBL" id="DQ424856">
    <property type="protein sequence ID" value="ABE47544.1"/>
    <property type="molecule type" value="Genomic_DNA"/>
</dbReference>
<dbReference type="RefSeq" id="YP_567086.1">
    <property type="nucleotide sequence ID" value="NC_007957.1"/>
</dbReference>
<dbReference type="SMR" id="Q0ZJ10"/>
<dbReference type="FunCoup" id="Q0ZJ10">
    <property type="interactions" value="22"/>
</dbReference>
<dbReference type="STRING" id="29760.Q0ZJ10"/>
<dbReference type="GeneID" id="4025047"/>
<dbReference type="KEGG" id="vvi:4025047"/>
<dbReference type="InParanoid" id="Q0ZJ10"/>
<dbReference type="OrthoDB" id="162562at71240"/>
<dbReference type="Proteomes" id="UP000009183">
    <property type="component" value="Chloroplast"/>
</dbReference>
<dbReference type="GO" id="GO:0009535">
    <property type="term" value="C:chloroplast thylakoid membrane"/>
    <property type="evidence" value="ECO:0007669"/>
    <property type="project" value="UniProtKB-SubCell"/>
</dbReference>
<dbReference type="GO" id="GO:0009522">
    <property type="term" value="C:photosystem I"/>
    <property type="evidence" value="ECO:0007669"/>
    <property type="project" value="UniProtKB-KW"/>
</dbReference>
<dbReference type="GO" id="GO:0015979">
    <property type="term" value="P:photosynthesis"/>
    <property type="evidence" value="ECO:0007669"/>
    <property type="project" value="UniProtKB-UniRule"/>
</dbReference>
<dbReference type="HAMAP" id="MF_00431">
    <property type="entry name" value="PSI_PsaI"/>
    <property type="match status" value="1"/>
</dbReference>
<dbReference type="InterPro" id="IPR001302">
    <property type="entry name" value="PSI_PsaI"/>
</dbReference>
<dbReference type="InterPro" id="IPR036357">
    <property type="entry name" value="PSI_PsaI_sf"/>
</dbReference>
<dbReference type="NCBIfam" id="TIGR03052">
    <property type="entry name" value="PS_I_psaI"/>
    <property type="match status" value="1"/>
</dbReference>
<dbReference type="PANTHER" id="PTHR35775">
    <property type="match status" value="1"/>
</dbReference>
<dbReference type="PANTHER" id="PTHR35775:SF2">
    <property type="entry name" value="PHOTOSYSTEM I REACTION CENTER SUBUNIT VIII"/>
    <property type="match status" value="1"/>
</dbReference>
<dbReference type="Pfam" id="PF00796">
    <property type="entry name" value="PSI_8"/>
    <property type="match status" value="1"/>
</dbReference>
<dbReference type="SUPFAM" id="SSF81540">
    <property type="entry name" value="Subunit VIII of photosystem I reaction centre, PsaI"/>
    <property type="match status" value="1"/>
</dbReference>
<name>PSAI_VITVI</name>
<accession>Q0ZJ10</accession>
<comment type="function">
    <text evidence="1">May help in the organization of the PsaL subunit.</text>
</comment>
<comment type="subcellular location">
    <subcellularLocation>
        <location evidence="1">Plastid</location>
        <location evidence="1">Chloroplast thylakoid membrane</location>
        <topology evidence="1">Single-pass membrane protein</topology>
    </subcellularLocation>
</comment>
<comment type="similarity">
    <text evidence="1">Belongs to the PsaI family.</text>
</comment>
<sequence length="36" mass="3950">MITLNLPSILVPLVGLVFPAIAMASLFLHVQKNKIF</sequence>
<reference key="1">
    <citation type="journal article" date="2006" name="BMC Evol. Biol.">
        <title>Phylogenetic analyses of Vitis (Vitaceae) based on complete chloroplast genome sequences: effects of taxon sampling and phylogenetic methods on resolving relationships among rosids.</title>
        <authorList>
            <person name="Jansen R.K."/>
            <person name="Kaittanis C."/>
            <person name="Lee S.-B."/>
            <person name="Saski C."/>
            <person name="Tomkins J."/>
            <person name="Alverson A.J."/>
            <person name="Daniell H."/>
        </authorList>
    </citation>
    <scope>NUCLEOTIDE SEQUENCE [LARGE SCALE GENOMIC DNA]</scope>
    <source>
        <strain>cv. Maxxa</strain>
    </source>
</reference>
<evidence type="ECO:0000255" key="1">
    <source>
        <dbReference type="HAMAP-Rule" id="MF_00431"/>
    </source>
</evidence>
<keyword id="KW-0150">Chloroplast</keyword>
<keyword id="KW-0472">Membrane</keyword>
<keyword id="KW-0602">Photosynthesis</keyword>
<keyword id="KW-0603">Photosystem I</keyword>
<keyword id="KW-0934">Plastid</keyword>
<keyword id="KW-1185">Reference proteome</keyword>
<keyword id="KW-0793">Thylakoid</keyword>
<keyword id="KW-0812">Transmembrane</keyword>
<keyword id="KW-1133">Transmembrane helix</keyword>
<protein>
    <recommendedName>
        <fullName evidence="1">Photosystem I reaction center subunit VIII</fullName>
        <shortName evidence="1">PSI-I</shortName>
    </recommendedName>
</protein>
<organism>
    <name type="scientific">Vitis vinifera</name>
    <name type="common">Grape</name>
    <dbReference type="NCBI Taxonomy" id="29760"/>
    <lineage>
        <taxon>Eukaryota</taxon>
        <taxon>Viridiplantae</taxon>
        <taxon>Streptophyta</taxon>
        <taxon>Embryophyta</taxon>
        <taxon>Tracheophyta</taxon>
        <taxon>Spermatophyta</taxon>
        <taxon>Magnoliopsida</taxon>
        <taxon>eudicotyledons</taxon>
        <taxon>Gunneridae</taxon>
        <taxon>Pentapetalae</taxon>
        <taxon>rosids</taxon>
        <taxon>Vitales</taxon>
        <taxon>Vitaceae</taxon>
        <taxon>Viteae</taxon>
        <taxon>Vitis</taxon>
    </lineage>
</organism>
<geneLocation type="chloroplast"/>